<accession>B1JGB5</accession>
<comment type="similarity">
    <text evidence="1">Belongs to the UPF0250 family.</text>
</comment>
<dbReference type="EMBL" id="CP000950">
    <property type="protein sequence ID" value="ACA69298.1"/>
    <property type="molecule type" value="Genomic_DNA"/>
</dbReference>
<dbReference type="SMR" id="B1JGB5"/>
<dbReference type="KEGG" id="ypy:YPK_3025"/>
<dbReference type="PATRIC" id="fig|502800.11.peg.3746"/>
<dbReference type="GO" id="GO:0005829">
    <property type="term" value="C:cytosol"/>
    <property type="evidence" value="ECO:0007669"/>
    <property type="project" value="TreeGrafter"/>
</dbReference>
<dbReference type="FunFam" id="3.30.70.260:FF:000002">
    <property type="entry name" value="UPF0250 protein YbeD"/>
    <property type="match status" value="1"/>
</dbReference>
<dbReference type="Gene3D" id="3.30.70.260">
    <property type="match status" value="1"/>
</dbReference>
<dbReference type="HAMAP" id="MF_00659">
    <property type="entry name" value="UPF0250"/>
    <property type="match status" value="1"/>
</dbReference>
<dbReference type="InterPro" id="IPR007454">
    <property type="entry name" value="UPF0250_YbeD-like"/>
</dbReference>
<dbReference type="InterPro" id="IPR027471">
    <property type="entry name" value="YbeD-like_sf"/>
</dbReference>
<dbReference type="NCBIfam" id="NF003447">
    <property type="entry name" value="PRK04998.1"/>
    <property type="match status" value="1"/>
</dbReference>
<dbReference type="PANTHER" id="PTHR38036">
    <property type="entry name" value="UPF0250 PROTEIN YBED"/>
    <property type="match status" value="1"/>
</dbReference>
<dbReference type="PANTHER" id="PTHR38036:SF1">
    <property type="entry name" value="UPF0250 PROTEIN YBED"/>
    <property type="match status" value="1"/>
</dbReference>
<dbReference type="Pfam" id="PF04359">
    <property type="entry name" value="DUF493"/>
    <property type="match status" value="1"/>
</dbReference>
<dbReference type="SUPFAM" id="SSF117991">
    <property type="entry name" value="YbeD/HP0495-like"/>
    <property type="match status" value="1"/>
</dbReference>
<organism>
    <name type="scientific">Yersinia pseudotuberculosis serotype O:3 (strain YPIII)</name>
    <dbReference type="NCBI Taxonomy" id="502800"/>
    <lineage>
        <taxon>Bacteria</taxon>
        <taxon>Pseudomonadati</taxon>
        <taxon>Pseudomonadota</taxon>
        <taxon>Gammaproteobacteria</taxon>
        <taxon>Enterobacterales</taxon>
        <taxon>Yersiniaceae</taxon>
        <taxon>Yersinia</taxon>
    </lineage>
</organism>
<protein>
    <recommendedName>
        <fullName evidence="1">UPF0250 protein YPK_3025</fullName>
    </recommendedName>
</protein>
<name>Y3025_YERPY</name>
<sequence length="87" mass="9805">MKTKLNELLEFPCSFTYKVMGIAEPQLVDQVVEVVQRHAPGEYTPQVKPSSKGNYHSVSITITATHIDQVETLYEELGNLELVKMVL</sequence>
<feature type="chain" id="PRO_1000131269" description="UPF0250 protein YPK_3025">
    <location>
        <begin position="1"/>
        <end position="87"/>
    </location>
</feature>
<gene>
    <name type="ordered locus">YPK_3025</name>
</gene>
<evidence type="ECO:0000255" key="1">
    <source>
        <dbReference type="HAMAP-Rule" id="MF_00659"/>
    </source>
</evidence>
<reference key="1">
    <citation type="submission" date="2008-02" db="EMBL/GenBank/DDBJ databases">
        <title>Complete sequence of Yersinia pseudotuberculosis YPIII.</title>
        <authorList>
            <consortium name="US DOE Joint Genome Institute"/>
            <person name="Copeland A."/>
            <person name="Lucas S."/>
            <person name="Lapidus A."/>
            <person name="Glavina del Rio T."/>
            <person name="Dalin E."/>
            <person name="Tice H."/>
            <person name="Bruce D."/>
            <person name="Goodwin L."/>
            <person name="Pitluck S."/>
            <person name="Munk A.C."/>
            <person name="Brettin T."/>
            <person name="Detter J.C."/>
            <person name="Han C."/>
            <person name="Tapia R."/>
            <person name="Schmutz J."/>
            <person name="Larimer F."/>
            <person name="Land M."/>
            <person name="Hauser L."/>
            <person name="Challacombe J.F."/>
            <person name="Green L."/>
            <person name="Lindler L.E."/>
            <person name="Nikolich M.P."/>
            <person name="Richardson P."/>
        </authorList>
    </citation>
    <scope>NUCLEOTIDE SEQUENCE [LARGE SCALE GENOMIC DNA]</scope>
    <source>
        <strain>YPIII</strain>
    </source>
</reference>
<proteinExistence type="inferred from homology"/>